<name>NADK_STAES</name>
<feature type="chain" id="PRO_0000120664" description="NAD kinase">
    <location>
        <begin position="1"/>
        <end position="269"/>
    </location>
</feature>
<feature type="active site" description="Proton acceptor" evidence="1">
    <location>
        <position position="45"/>
    </location>
</feature>
<feature type="binding site" evidence="1">
    <location>
        <begin position="45"/>
        <end position="46"/>
    </location>
    <ligand>
        <name>NAD(+)</name>
        <dbReference type="ChEBI" id="CHEBI:57540"/>
    </ligand>
</feature>
<feature type="binding site" evidence="1">
    <location>
        <begin position="122"/>
        <end position="123"/>
    </location>
    <ligand>
        <name>NAD(+)</name>
        <dbReference type="ChEBI" id="CHEBI:57540"/>
    </ligand>
</feature>
<feature type="binding site" evidence="1">
    <location>
        <position position="149"/>
    </location>
    <ligand>
        <name>NAD(+)</name>
        <dbReference type="ChEBI" id="CHEBI:57540"/>
    </ligand>
</feature>
<feature type="binding site" evidence="1">
    <location>
        <position position="151"/>
    </location>
    <ligand>
        <name>NAD(+)</name>
        <dbReference type="ChEBI" id="CHEBI:57540"/>
    </ligand>
</feature>
<feature type="binding site" evidence="1">
    <location>
        <position position="186"/>
    </location>
    <ligand>
        <name>NAD(+)</name>
        <dbReference type="ChEBI" id="CHEBI:57540"/>
    </ligand>
</feature>
<proteinExistence type="inferred from homology"/>
<protein>
    <recommendedName>
        <fullName evidence="1">NAD kinase</fullName>
        <ecNumber evidence="1">2.7.1.23</ecNumber>
    </recommendedName>
    <alternativeName>
        <fullName evidence="1">ATP-dependent NAD kinase</fullName>
    </alternativeName>
</protein>
<reference key="1">
    <citation type="journal article" date="2003" name="Mol. Microbiol.">
        <title>Genome-based analysis of virulence genes in a non-biofilm-forming Staphylococcus epidermidis strain (ATCC 12228).</title>
        <authorList>
            <person name="Zhang Y.-Q."/>
            <person name="Ren S.-X."/>
            <person name="Li H.-L."/>
            <person name="Wang Y.-X."/>
            <person name="Fu G."/>
            <person name="Yang J."/>
            <person name="Qin Z.-Q."/>
            <person name="Miao Y.-G."/>
            <person name="Wang W.-Y."/>
            <person name="Chen R.-S."/>
            <person name="Shen Y."/>
            <person name="Chen Z."/>
            <person name="Yuan Z.-H."/>
            <person name="Zhao G.-P."/>
            <person name="Qu D."/>
            <person name="Danchin A."/>
            <person name="Wen Y.-M."/>
        </authorList>
    </citation>
    <scope>NUCLEOTIDE SEQUENCE [LARGE SCALE GENOMIC DNA]</scope>
    <source>
        <strain>ATCC 12228 / FDA PCI 1200</strain>
    </source>
</reference>
<keyword id="KW-0067">ATP-binding</keyword>
<keyword id="KW-0963">Cytoplasm</keyword>
<keyword id="KW-0418">Kinase</keyword>
<keyword id="KW-0520">NAD</keyword>
<keyword id="KW-0521">NADP</keyword>
<keyword id="KW-0547">Nucleotide-binding</keyword>
<keyword id="KW-0808">Transferase</keyword>
<dbReference type="EC" id="2.7.1.23" evidence="1"/>
<dbReference type="EMBL" id="AE015929">
    <property type="protein sequence ID" value="AAO04293.1"/>
    <property type="molecule type" value="Genomic_DNA"/>
</dbReference>
<dbReference type="RefSeq" id="NP_764251.1">
    <property type="nucleotide sequence ID" value="NC_004461.1"/>
</dbReference>
<dbReference type="RefSeq" id="WP_001829306.1">
    <property type="nucleotide sequence ID" value="NZ_WBME01000019.1"/>
</dbReference>
<dbReference type="SMR" id="Q8CT62"/>
<dbReference type="KEGG" id="sep:SE_0696"/>
<dbReference type="PATRIC" id="fig|176280.10.peg.670"/>
<dbReference type="eggNOG" id="COG0061">
    <property type="taxonomic scope" value="Bacteria"/>
</dbReference>
<dbReference type="HOGENOM" id="CLU_008831_0_3_9"/>
<dbReference type="OrthoDB" id="9774737at2"/>
<dbReference type="Proteomes" id="UP000001411">
    <property type="component" value="Chromosome"/>
</dbReference>
<dbReference type="GO" id="GO:0005737">
    <property type="term" value="C:cytoplasm"/>
    <property type="evidence" value="ECO:0007669"/>
    <property type="project" value="UniProtKB-SubCell"/>
</dbReference>
<dbReference type="GO" id="GO:0005524">
    <property type="term" value="F:ATP binding"/>
    <property type="evidence" value="ECO:0007669"/>
    <property type="project" value="UniProtKB-KW"/>
</dbReference>
<dbReference type="GO" id="GO:0046872">
    <property type="term" value="F:metal ion binding"/>
    <property type="evidence" value="ECO:0007669"/>
    <property type="project" value="UniProtKB-UniRule"/>
</dbReference>
<dbReference type="GO" id="GO:0051287">
    <property type="term" value="F:NAD binding"/>
    <property type="evidence" value="ECO:0007669"/>
    <property type="project" value="UniProtKB-ARBA"/>
</dbReference>
<dbReference type="GO" id="GO:0003951">
    <property type="term" value="F:NAD+ kinase activity"/>
    <property type="evidence" value="ECO:0007669"/>
    <property type="project" value="UniProtKB-UniRule"/>
</dbReference>
<dbReference type="GO" id="GO:0019674">
    <property type="term" value="P:NAD metabolic process"/>
    <property type="evidence" value="ECO:0007669"/>
    <property type="project" value="InterPro"/>
</dbReference>
<dbReference type="GO" id="GO:0006741">
    <property type="term" value="P:NADP biosynthetic process"/>
    <property type="evidence" value="ECO:0007669"/>
    <property type="project" value="UniProtKB-UniRule"/>
</dbReference>
<dbReference type="FunFam" id="2.60.200.30:FF:000002">
    <property type="entry name" value="NAD kinase"/>
    <property type="match status" value="1"/>
</dbReference>
<dbReference type="Gene3D" id="3.40.50.10330">
    <property type="entry name" value="Probable inorganic polyphosphate/atp-NAD kinase, domain 1"/>
    <property type="match status" value="1"/>
</dbReference>
<dbReference type="Gene3D" id="2.60.200.30">
    <property type="entry name" value="Probable inorganic polyphosphate/atp-NAD kinase, domain 2"/>
    <property type="match status" value="1"/>
</dbReference>
<dbReference type="HAMAP" id="MF_00361">
    <property type="entry name" value="NAD_kinase"/>
    <property type="match status" value="1"/>
</dbReference>
<dbReference type="InterPro" id="IPR017438">
    <property type="entry name" value="ATP-NAD_kinase_N"/>
</dbReference>
<dbReference type="InterPro" id="IPR017437">
    <property type="entry name" value="ATP-NAD_kinase_PpnK-typ_C"/>
</dbReference>
<dbReference type="InterPro" id="IPR016064">
    <property type="entry name" value="NAD/diacylglycerol_kinase_sf"/>
</dbReference>
<dbReference type="InterPro" id="IPR002504">
    <property type="entry name" value="NADK"/>
</dbReference>
<dbReference type="NCBIfam" id="NF003424">
    <property type="entry name" value="PRK04885.1"/>
    <property type="match status" value="1"/>
</dbReference>
<dbReference type="PANTHER" id="PTHR20275">
    <property type="entry name" value="NAD KINASE"/>
    <property type="match status" value="1"/>
</dbReference>
<dbReference type="PANTHER" id="PTHR20275:SF0">
    <property type="entry name" value="NAD KINASE"/>
    <property type="match status" value="1"/>
</dbReference>
<dbReference type="Pfam" id="PF01513">
    <property type="entry name" value="NAD_kinase"/>
    <property type="match status" value="1"/>
</dbReference>
<dbReference type="Pfam" id="PF20143">
    <property type="entry name" value="NAD_kinase_C"/>
    <property type="match status" value="1"/>
</dbReference>
<dbReference type="SUPFAM" id="SSF111331">
    <property type="entry name" value="NAD kinase/diacylglycerol kinase-like"/>
    <property type="match status" value="1"/>
</dbReference>
<organism>
    <name type="scientific">Staphylococcus epidermidis (strain ATCC 12228 / FDA PCI 1200)</name>
    <dbReference type="NCBI Taxonomy" id="176280"/>
    <lineage>
        <taxon>Bacteria</taxon>
        <taxon>Bacillati</taxon>
        <taxon>Bacillota</taxon>
        <taxon>Bacilli</taxon>
        <taxon>Bacillales</taxon>
        <taxon>Staphylococcaceae</taxon>
        <taxon>Staphylococcus</taxon>
    </lineage>
</organism>
<comment type="function">
    <text evidence="1">Involved in the regulation of the intracellular balance of NAD and NADP, and is a key enzyme in the biosynthesis of NADP. Catalyzes specifically the phosphorylation on 2'-hydroxyl of the adenosine moiety of NAD to yield NADP.</text>
</comment>
<comment type="catalytic activity">
    <reaction evidence="1">
        <text>NAD(+) + ATP = ADP + NADP(+) + H(+)</text>
        <dbReference type="Rhea" id="RHEA:18629"/>
        <dbReference type="ChEBI" id="CHEBI:15378"/>
        <dbReference type="ChEBI" id="CHEBI:30616"/>
        <dbReference type="ChEBI" id="CHEBI:57540"/>
        <dbReference type="ChEBI" id="CHEBI:58349"/>
        <dbReference type="ChEBI" id="CHEBI:456216"/>
        <dbReference type="EC" id="2.7.1.23"/>
    </reaction>
</comment>
<comment type="cofactor">
    <cofactor evidence="1">
        <name>a divalent metal cation</name>
        <dbReference type="ChEBI" id="CHEBI:60240"/>
    </cofactor>
</comment>
<comment type="subcellular location">
    <subcellularLocation>
        <location evidence="1">Cytoplasm</location>
    </subcellularLocation>
</comment>
<comment type="similarity">
    <text evidence="1">Belongs to the NAD kinase family.</text>
</comment>
<gene>
    <name evidence="1" type="primary">nadK</name>
    <name type="ordered locus">SE_0696</name>
</gene>
<sequence length="269" mass="30603">MRYTILTKGDSKSNALKHKMINHMKDFQMVEDSENPEIVISVGGDGTLLQAFHQYSHMLSKVAFVGIHTGHLGFYADWLPHEVEKLIIEINNSEFQVIEYPLLELIVRYNDNGYETRYLALNEATMKTENGSTLVVDVNIRGKHFERFRGDGLCISTPSGSTAYNKALGGALIHPSLEAMQIAEIASINNRVFRTVGSPLVLPKHHTCLITPVNHDTIRTTIDHVSIKHKNVNAIQYRVANEKVRFARFRPFPFWKRVHDSFISSDDER</sequence>
<evidence type="ECO:0000255" key="1">
    <source>
        <dbReference type="HAMAP-Rule" id="MF_00361"/>
    </source>
</evidence>
<accession>Q8CT62</accession>